<feature type="chain" id="PRO_0000056700" description="Rho GTPase-activating protein 1">
    <location>
        <begin position="1"/>
        <end position="439"/>
    </location>
</feature>
<feature type="domain" description="CRAL-TRIO" evidence="2">
    <location>
        <begin position="63"/>
        <end position="218"/>
    </location>
</feature>
<feature type="domain" description="Rho-GAP" evidence="3">
    <location>
        <begin position="244"/>
        <end position="431"/>
    </location>
</feature>
<feature type="region of interest" description="Disordered" evidence="4">
    <location>
        <begin position="28"/>
        <end position="52"/>
    </location>
</feature>
<feature type="short sequence motif" description="SH3-binding">
    <location>
        <begin position="228"/>
        <end position="238"/>
    </location>
</feature>
<feature type="compositionally biased region" description="Basic and acidic residues" evidence="4">
    <location>
        <begin position="28"/>
        <end position="48"/>
    </location>
</feature>
<feature type="site" description="Arginine finger; crucial for GTP hydrolysis by stabilizing the transition state" evidence="3">
    <location>
        <position position="282"/>
    </location>
</feature>
<feature type="modified residue" description="N-acetylmethionine" evidence="10 14">
    <location>
        <position position="1"/>
    </location>
</feature>
<feature type="modified residue" description="Phosphoserine" evidence="1">
    <location>
        <position position="44"/>
    </location>
</feature>
<feature type="modified residue" description="Phosphoserine" evidence="15">
    <location>
        <position position="47"/>
    </location>
</feature>
<feature type="modified residue" description="Phosphoserine" evidence="15">
    <location>
        <position position="50"/>
    </location>
</feature>
<feature type="modified residue" description="Phosphoserine" evidence="9 12 13 15">
    <location>
        <position position="51"/>
    </location>
</feature>
<feature type="modified residue" description="Phosphotyrosine" evidence="1">
    <location>
        <position position="65"/>
    </location>
</feature>
<feature type="modified residue" description="N6-acetyllysine" evidence="11">
    <location>
        <position position="80"/>
    </location>
</feature>
<feature type="sequence variant" id="VAR_049137" description="In dbSNP:rs11822837.">
    <original>R</original>
    <variation>C</variation>
    <location>
        <position position="369"/>
    </location>
</feature>
<feature type="strand" evidence="17">
    <location>
        <begin position="242"/>
        <end position="244"/>
    </location>
</feature>
<feature type="helix" evidence="16">
    <location>
        <begin position="246"/>
        <end position="252"/>
    </location>
</feature>
<feature type="helix" evidence="16">
    <location>
        <begin position="261"/>
        <end position="273"/>
    </location>
</feature>
<feature type="turn" evidence="18">
    <location>
        <begin position="274"/>
        <end position="276"/>
    </location>
</feature>
<feature type="turn" evidence="16">
    <location>
        <begin position="278"/>
        <end position="282"/>
    </location>
</feature>
<feature type="helix" evidence="16">
    <location>
        <begin position="287"/>
        <end position="298"/>
    </location>
</feature>
<feature type="helix" evidence="16">
    <location>
        <begin position="305"/>
        <end position="307"/>
    </location>
</feature>
<feature type="helix" evidence="16">
    <location>
        <begin position="312"/>
        <end position="324"/>
    </location>
</feature>
<feature type="strand" evidence="16">
    <location>
        <begin position="325"/>
        <end position="327"/>
    </location>
</feature>
<feature type="helix" evidence="16">
    <location>
        <begin position="332"/>
        <end position="334"/>
    </location>
</feature>
<feature type="helix" evidence="16">
    <location>
        <begin position="335"/>
        <end position="339"/>
    </location>
</feature>
<feature type="helix" evidence="16">
    <location>
        <begin position="341"/>
        <end position="343"/>
    </location>
</feature>
<feature type="helix" evidence="16">
    <location>
        <begin position="346"/>
        <end position="348"/>
    </location>
</feature>
<feature type="helix" evidence="16">
    <location>
        <begin position="349"/>
        <end position="357"/>
    </location>
</feature>
<feature type="helix" evidence="16">
    <location>
        <begin position="362"/>
        <end position="380"/>
    </location>
</feature>
<feature type="helix" evidence="16">
    <location>
        <begin position="382"/>
        <end position="385"/>
    </location>
</feature>
<feature type="helix" evidence="16">
    <location>
        <begin position="389"/>
        <end position="400"/>
    </location>
</feature>
<feature type="helix" evidence="16">
    <location>
        <begin position="406"/>
        <end position="411"/>
    </location>
</feature>
<feature type="helix" evidence="16">
    <location>
        <begin position="413"/>
        <end position="425"/>
    </location>
</feature>
<feature type="helix" evidence="16">
    <location>
        <begin position="427"/>
        <end position="430"/>
    </location>
</feature>
<organism>
    <name type="scientific">Homo sapiens</name>
    <name type="common">Human</name>
    <dbReference type="NCBI Taxonomy" id="9606"/>
    <lineage>
        <taxon>Eukaryota</taxon>
        <taxon>Metazoa</taxon>
        <taxon>Chordata</taxon>
        <taxon>Craniata</taxon>
        <taxon>Vertebrata</taxon>
        <taxon>Euteleostomi</taxon>
        <taxon>Mammalia</taxon>
        <taxon>Eutheria</taxon>
        <taxon>Euarchontoglires</taxon>
        <taxon>Primates</taxon>
        <taxon>Haplorrhini</taxon>
        <taxon>Catarrhini</taxon>
        <taxon>Hominidae</taxon>
        <taxon>Homo</taxon>
    </lineage>
</organism>
<dbReference type="EMBL" id="U02570">
    <property type="protein sequence ID" value="AAA16142.1"/>
    <property type="status" value="ALT_INIT"/>
    <property type="molecule type" value="mRNA"/>
</dbReference>
<dbReference type="EMBL" id="Z23024">
    <property type="protein sequence ID" value="CAA80560.1"/>
    <property type="molecule type" value="mRNA"/>
</dbReference>
<dbReference type="EMBL" id="CH471064">
    <property type="protein sequence ID" value="EAW67983.1"/>
    <property type="molecule type" value="Genomic_DNA"/>
</dbReference>
<dbReference type="EMBL" id="CH471064">
    <property type="protein sequence ID" value="EAW67984.1"/>
    <property type="molecule type" value="Genomic_DNA"/>
</dbReference>
<dbReference type="EMBL" id="BC018118">
    <property type="protein sequence ID" value="AAH18118.1"/>
    <property type="molecule type" value="mRNA"/>
</dbReference>
<dbReference type="CCDS" id="CCDS7922.1"/>
<dbReference type="PIR" id="A49678">
    <property type="entry name" value="A49678"/>
</dbReference>
<dbReference type="RefSeq" id="NP_004299.1">
    <property type="nucleotide sequence ID" value="NM_004308.5"/>
</dbReference>
<dbReference type="RefSeq" id="XP_011518397.1">
    <property type="nucleotide sequence ID" value="XM_011520095.1"/>
</dbReference>
<dbReference type="RefSeq" id="XP_047282889.1">
    <property type="nucleotide sequence ID" value="XM_047426933.1"/>
</dbReference>
<dbReference type="RefSeq" id="XP_054224721.1">
    <property type="nucleotide sequence ID" value="XM_054368746.1"/>
</dbReference>
<dbReference type="PDB" id="1AM4">
    <property type="method" value="X-ray"/>
    <property type="resolution" value="2.70 A"/>
    <property type="chains" value="A/B/C=233-431"/>
</dbReference>
<dbReference type="PDB" id="1GRN">
    <property type="method" value="X-ray"/>
    <property type="resolution" value="2.10 A"/>
    <property type="chains" value="B=237-439"/>
</dbReference>
<dbReference type="PDB" id="1OW3">
    <property type="method" value="X-ray"/>
    <property type="resolution" value="1.80 A"/>
    <property type="chains" value="A=198-439"/>
</dbReference>
<dbReference type="PDB" id="1RGP">
    <property type="method" value="X-ray"/>
    <property type="resolution" value="2.00 A"/>
    <property type="chains" value="A=198-439"/>
</dbReference>
<dbReference type="PDB" id="1TX4">
    <property type="method" value="X-ray"/>
    <property type="resolution" value="1.65 A"/>
    <property type="chains" value="A=234-431"/>
</dbReference>
<dbReference type="PDB" id="2NGR">
    <property type="method" value="X-ray"/>
    <property type="resolution" value="1.90 A"/>
    <property type="chains" value="B=206-439"/>
</dbReference>
<dbReference type="PDB" id="5M6X">
    <property type="method" value="X-ray"/>
    <property type="resolution" value="2.40 A"/>
    <property type="chains" value="A/H=198-437"/>
</dbReference>
<dbReference type="PDB" id="5M70">
    <property type="method" value="X-ray"/>
    <property type="resolution" value="2.20 A"/>
    <property type="chains" value="A/F=198-437"/>
</dbReference>
<dbReference type="PDB" id="6R3V">
    <property type="method" value="X-ray"/>
    <property type="resolution" value="1.75 A"/>
    <property type="chains" value="A=1-439"/>
</dbReference>
<dbReference type="PDB" id="7QSC">
    <property type="method" value="X-ray"/>
    <property type="resolution" value="1.91 A"/>
    <property type="chains" value="A/C=198-439"/>
</dbReference>
<dbReference type="PDB" id="7QTM">
    <property type="method" value="X-ray"/>
    <property type="resolution" value="2.25 A"/>
    <property type="chains" value="A/H=198-439"/>
</dbReference>
<dbReference type="PDBsum" id="1AM4"/>
<dbReference type="PDBsum" id="1GRN"/>
<dbReference type="PDBsum" id="1OW3"/>
<dbReference type="PDBsum" id="1RGP"/>
<dbReference type="PDBsum" id="1TX4"/>
<dbReference type="PDBsum" id="2NGR"/>
<dbReference type="PDBsum" id="5M6X"/>
<dbReference type="PDBsum" id="5M70"/>
<dbReference type="PDBsum" id="6R3V"/>
<dbReference type="PDBsum" id="7QSC"/>
<dbReference type="PDBsum" id="7QTM"/>
<dbReference type="SMR" id="Q07960"/>
<dbReference type="BioGRID" id="106885">
    <property type="interactions" value="255"/>
</dbReference>
<dbReference type="DIP" id="DIP-6081N"/>
<dbReference type="FunCoup" id="Q07960">
    <property type="interactions" value="2451"/>
</dbReference>
<dbReference type="IntAct" id="Q07960">
    <property type="interactions" value="70"/>
</dbReference>
<dbReference type="MINT" id="Q07960"/>
<dbReference type="STRING" id="9606.ENSP00000310491"/>
<dbReference type="GlyGen" id="Q07960">
    <property type="glycosylation" value="1 site, 1 O-linked glycan (1 site)"/>
</dbReference>
<dbReference type="iPTMnet" id="Q07960"/>
<dbReference type="MetOSite" id="Q07960"/>
<dbReference type="PhosphoSitePlus" id="Q07960"/>
<dbReference type="SwissPalm" id="Q07960"/>
<dbReference type="BioMuta" id="ARHGAP1"/>
<dbReference type="DMDM" id="3024550"/>
<dbReference type="OGP" id="Q07960"/>
<dbReference type="jPOST" id="Q07960"/>
<dbReference type="MassIVE" id="Q07960"/>
<dbReference type="PaxDb" id="9606-ENSP00000310491"/>
<dbReference type="PeptideAtlas" id="Q07960"/>
<dbReference type="PRIDE" id="Q07960"/>
<dbReference type="ProteomicsDB" id="58563"/>
<dbReference type="Pumba" id="Q07960"/>
<dbReference type="Antibodypedia" id="1399">
    <property type="antibodies" value="237 antibodies from 30 providers"/>
</dbReference>
<dbReference type="DNASU" id="392"/>
<dbReference type="Ensembl" id="ENST00000311956.9">
    <property type="protein sequence ID" value="ENSP00000310491.4"/>
    <property type="gene ID" value="ENSG00000175220.12"/>
</dbReference>
<dbReference type="GeneID" id="392"/>
<dbReference type="KEGG" id="hsa:392"/>
<dbReference type="MANE-Select" id="ENST00000311956.9">
    <property type="protein sequence ID" value="ENSP00000310491.4"/>
    <property type="RefSeq nucleotide sequence ID" value="NM_004308.5"/>
    <property type="RefSeq protein sequence ID" value="NP_004299.1"/>
</dbReference>
<dbReference type="UCSC" id="uc001ndd.5">
    <property type="organism name" value="human"/>
</dbReference>
<dbReference type="AGR" id="HGNC:673"/>
<dbReference type="CTD" id="392"/>
<dbReference type="DisGeNET" id="392"/>
<dbReference type="GeneCards" id="ARHGAP1"/>
<dbReference type="HGNC" id="HGNC:673">
    <property type="gene designation" value="ARHGAP1"/>
</dbReference>
<dbReference type="HPA" id="ENSG00000175220">
    <property type="expression patterns" value="Low tissue specificity"/>
</dbReference>
<dbReference type="MalaCards" id="ARHGAP1"/>
<dbReference type="MIM" id="602732">
    <property type="type" value="gene"/>
</dbReference>
<dbReference type="neXtProt" id="NX_Q07960"/>
<dbReference type="OpenTargets" id="ENSG00000175220"/>
<dbReference type="PharmGKB" id="PA24956"/>
<dbReference type="VEuPathDB" id="HostDB:ENSG00000175220"/>
<dbReference type="eggNOG" id="KOG4406">
    <property type="taxonomic scope" value="Eukaryota"/>
</dbReference>
<dbReference type="GeneTree" id="ENSGT00940000160630"/>
<dbReference type="HOGENOM" id="CLU_030214_1_0_1"/>
<dbReference type="InParanoid" id="Q07960"/>
<dbReference type="OMA" id="SHNPDCD"/>
<dbReference type="OrthoDB" id="19923at2759"/>
<dbReference type="PAN-GO" id="Q07960">
    <property type="GO annotations" value="4 GO annotations based on evolutionary models"/>
</dbReference>
<dbReference type="PhylomeDB" id="Q07960"/>
<dbReference type="TreeFam" id="TF324164"/>
<dbReference type="PathwayCommons" id="Q07960"/>
<dbReference type="Reactome" id="R-HSA-8980692">
    <property type="pathway name" value="RHOA GTPase cycle"/>
</dbReference>
<dbReference type="Reactome" id="R-HSA-9013026">
    <property type="pathway name" value="RHOB GTPase cycle"/>
</dbReference>
<dbReference type="Reactome" id="R-HSA-9013106">
    <property type="pathway name" value="RHOC GTPase cycle"/>
</dbReference>
<dbReference type="Reactome" id="R-HSA-9013148">
    <property type="pathway name" value="CDC42 GTPase cycle"/>
</dbReference>
<dbReference type="Reactome" id="R-HSA-9013149">
    <property type="pathway name" value="RAC1 GTPase cycle"/>
</dbReference>
<dbReference type="Reactome" id="R-HSA-9013404">
    <property type="pathway name" value="RAC2 GTPase cycle"/>
</dbReference>
<dbReference type="Reactome" id="R-HSA-9013405">
    <property type="pathway name" value="RHOD GTPase cycle"/>
</dbReference>
<dbReference type="Reactome" id="R-HSA-9013406">
    <property type="pathway name" value="RHOQ GTPase cycle"/>
</dbReference>
<dbReference type="Reactome" id="R-HSA-9013408">
    <property type="pathway name" value="RHOG GTPase cycle"/>
</dbReference>
<dbReference type="Reactome" id="R-HSA-9013409">
    <property type="pathway name" value="RHOJ GTPase cycle"/>
</dbReference>
<dbReference type="Reactome" id="R-HSA-9013423">
    <property type="pathway name" value="RAC3 GTPase cycle"/>
</dbReference>
<dbReference type="Reactome" id="R-HSA-9035034">
    <property type="pathway name" value="RHOF GTPase cycle"/>
</dbReference>
<dbReference type="Reactome" id="R-HSA-9696270">
    <property type="pathway name" value="RND2 GTPase cycle"/>
</dbReference>
<dbReference type="SignaLink" id="Q07960"/>
<dbReference type="SIGNOR" id="Q07960"/>
<dbReference type="BioGRID-ORCS" id="392">
    <property type="hits" value="29 hits in 1162 CRISPR screens"/>
</dbReference>
<dbReference type="CD-CODE" id="FB4E32DD">
    <property type="entry name" value="Presynaptic clusters and postsynaptic densities"/>
</dbReference>
<dbReference type="ChiTaRS" id="ARHGAP1">
    <property type="organism name" value="human"/>
</dbReference>
<dbReference type="EvolutionaryTrace" id="Q07960"/>
<dbReference type="GeneWiki" id="ARHGAP1"/>
<dbReference type="GenomeRNAi" id="392"/>
<dbReference type="Pharos" id="Q07960">
    <property type="development level" value="Tbio"/>
</dbReference>
<dbReference type="PRO" id="PR:Q07960"/>
<dbReference type="Proteomes" id="UP000005640">
    <property type="component" value="Chromosome 11"/>
</dbReference>
<dbReference type="RNAct" id="Q07960">
    <property type="molecule type" value="protein"/>
</dbReference>
<dbReference type="Bgee" id="ENSG00000175220">
    <property type="expression patterns" value="Expressed in gingival epithelium and 208 other cell types or tissues"/>
</dbReference>
<dbReference type="ExpressionAtlas" id="Q07960">
    <property type="expression patterns" value="baseline and differential"/>
</dbReference>
<dbReference type="GO" id="GO:0005929">
    <property type="term" value="C:cilium"/>
    <property type="evidence" value="ECO:0000314"/>
    <property type="project" value="HPA"/>
</dbReference>
<dbReference type="GO" id="GO:0005737">
    <property type="term" value="C:cytoplasm"/>
    <property type="evidence" value="ECO:0000314"/>
    <property type="project" value="BHF-UCL"/>
</dbReference>
<dbReference type="GO" id="GO:0005829">
    <property type="term" value="C:cytosol"/>
    <property type="evidence" value="ECO:0000314"/>
    <property type="project" value="HPA"/>
</dbReference>
<dbReference type="GO" id="GO:0010008">
    <property type="term" value="C:endosome membrane"/>
    <property type="evidence" value="ECO:0000314"/>
    <property type="project" value="CAFA"/>
</dbReference>
<dbReference type="GO" id="GO:0070062">
    <property type="term" value="C:extracellular exosome"/>
    <property type="evidence" value="ECO:0007005"/>
    <property type="project" value="UniProtKB"/>
</dbReference>
<dbReference type="GO" id="GO:0043231">
    <property type="term" value="C:intracellular membrane-bounded organelle"/>
    <property type="evidence" value="ECO:0000314"/>
    <property type="project" value="HPA"/>
</dbReference>
<dbReference type="GO" id="GO:0048471">
    <property type="term" value="C:perinuclear region of cytoplasm"/>
    <property type="evidence" value="ECO:0000314"/>
    <property type="project" value="CAFA"/>
</dbReference>
<dbReference type="GO" id="GO:0005886">
    <property type="term" value="C:plasma membrane"/>
    <property type="evidence" value="ECO:0007669"/>
    <property type="project" value="Ensembl"/>
</dbReference>
<dbReference type="GO" id="GO:0001726">
    <property type="term" value="C:ruffle"/>
    <property type="evidence" value="ECO:0007669"/>
    <property type="project" value="Ensembl"/>
</dbReference>
<dbReference type="GO" id="GO:0045296">
    <property type="term" value="F:cadherin binding"/>
    <property type="evidence" value="ECO:0007005"/>
    <property type="project" value="BHF-UCL"/>
</dbReference>
<dbReference type="GO" id="GO:0005096">
    <property type="term" value="F:GTPase activator activity"/>
    <property type="evidence" value="ECO:0000314"/>
    <property type="project" value="MGI"/>
</dbReference>
<dbReference type="GO" id="GO:0017124">
    <property type="term" value="F:SH3 domain binding"/>
    <property type="evidence" value="ECO:0007669"/>
    <property type="project" value="UniProtKB-KW"/>
</dbReference>
<dbReference type="GO" id="GO:0031267">
    <property type="term" value="F:small GTPase binding"/>
    <property type="evidence" value="ECO:0000353"/>
    <property type="project" value="CAFA"/>
</dbReference>
<dbReference type="GO" id="GO:0016197">
    <property type="term" value="P:endosomal transport"/>
    <property type="evidence" value="ECO:0000315"/>
    <property type="project" value="CAFA"/>
</dbReference>
<dbReference type="GO" id="GO:2001136">
    <property type="term" value="P:negative regulation of endocytic recycling"/>
    <property type="evidence" value="ECO:0000315"/>
    <property type="project" value="CAFA"/>
</dbReference>
<dbReference type="GO" id="GO:0051056">
    <property type="term" value="P:regulation of small GTPase mediated signal transduction"/>
    <property type="evidence" value="ECO:0000304"/>
    <property type="project" value="Reactome"/>
</dbReference>
<dbReference type="GO" id="GO:0007266">
    <property type="term" value="P:Rho protein signal transduction"/>
    <property type="evidence" value="ECO:0000304"/>
    <property type="project" value="ProtInc"/>
</dbReference>
<dbReference type="GO" id="GO:0007264">
    <property type="term" value="P:small GTPase-mediated signal transduction"/>
    <property type="evidence" value="ECO:0000314"/>
    <property type="project" value="MGI"/>
</dbReference>
<dbReference type="GO" id="GO:0033572">
    <property type="term" value="P:transferrin transport"/>
    <property type="evidence" value="ECO:0000315"/>
    <property type="project" value="CAFA"/>
</dbReference>
<dbReference type="CDD" id="cd04404">
    <property type="entry name" value="RhoGAP-p50rhoGAP"/>
    <property type="match status" value="1"/>
</dbReference>
<dbReference type="CDD" id="cd00170">
    <property type="entry name" value="SEC14"/>
    <property type="match status" value="1"/>
</dbReference>
<dbReference type="FunFam" id="1.10.555.10:FF:000024">
    <property type="entry name" value="Rho GTPase-activating protein 1"/>
    <property type="match status" value="1"/>
</dbReference>
<dbReference type="FunFam" id="3.40.525.10:FF:000007">
    <property type="entry name" value="rho GTPase-activating protein 1"/>
    <property type="match status" value="1"/>
</dbReference>
<dbReference type="Gene3D" id="3.40.525.10">
    <property type="entry name" value="CRAL-TRIO lipid binding domain"/>
    <property type="match status" value="1"/>
</dbReference>
<dbReference type="Gene3D" id="1.10.555.10">
    <property type="entry name" value="Rho GTPase activation protein"/>
    <property type="match status" value="1"/>
</dbReference>
<dbReference type="IDEAL" id="IID00316"/>
<dbReference type="InterPro" id="IPR049592">
    <property type="entry name" value="ARHGAP1_RhoGAP"/>
</dbReference>
<dbReference type="InterPro" id="IPR001251">
    <property type="entry name" value="CRAL-TRIO_dom"/>
</dbReference>
<dbReference type="InterPro" id="IPR036865">
    <property type="entry name" value="CRAL-TRIO_dom_sf"/>
</dbReference>
<dbReference type="InterPro" id="IPR008936">
    <property type="entry name" value="Rho_GTPase_activation_prot"/>
</dbReference>
<dbReference type="InterPro" id="IPR000198">
    <property type="entry name" value="RhoGAP_dom"/>
</dbReference>
<dbReference type="PANTHER" id="PTHR45808:SF6">
    <property type="entry name" value="RHO GTPASE-ACTIVATING PROTEIN 1"/>
    <property type="match status" value="1"/>
</dbReference>
<dbReference type="PANTHER" id="PTHR45808">
    <property type="entry name" value="RHO GTPASE-ACTIVATING PROTEIN 68F"/>
    <property type="match status" value="1"/>
</dbReference>
<dbReference type="Pfam" id="PF13716">
    <property type="entry name" value="CRAL_TRIO_2"/>
    <property type="match status" value="1"/>
</dbReference>
<dbReference type="Pfam" id="PF00620">
    <property type="entry name" value="RhoGAP"/>
    <property type="match status" value="1"/>
</dbReference>
<dbReference type="SMART" id="SM00324">
    <property type="entry name" value="RhoGAP"/>
    <property type="match status" value="1"/>
</dbReference>
<dbReference type="SMART" id="SM00516">
    <property type="entry name" value="SEC14"/>
    <property type="match status" value="1"/>
</dbReference>
<dbReference type="SUPFAM" id="SSF52087">
    <property type="entry name" value="CRAL/TRIO domain"/>
    <property type="match status" value="1"/>
</dbReference>
<dbReference type="SUPFAM" id="SSF48350">
    <property type="entry name" value="GTPase activation domain, GAP"/>
    <property type="match status" value="1"/>
</dbReference>
<dbReference type="PROSITE" id="PS50191">
    <property type="entry name" value="CRAL_TRIO"/>
    <property type="match status" value="1"/>
</dbReference>
<dbReference type="PROSITE" id="PS50238">
    <property type="entry name" value="RHOGAP"/>
    <property type="match status" value="1"/>
</dbReference>
<protein>
    <recommendedName>
        <fullName>Rho GTPase-activating protein 1</fullName>
    </recommendedName>
    <alternativeName>
        <fullName>CDC42 GTPase-activating protein</fullName>
    </alternativeName>
    <alternativeName>
        <fullName>GTPase-activating protein rhoGAP</fullName>
    </alternativeName>
    <alternativeName>
        <fullName>Rho-related small GTPase protein activator</fullName>
    </alternativeName>
    <alternativeName>
        <fullName>Rho-type GTPase-activating protein 1</fullName>
    </alternativeName>
    <alternativeName>
        <fullName>p50-RhoGAP</fullName>
    </alternativeName>
</protein>
<reference key="1">
    <citation type="journal article" date="1993" name="J. Biol. Chem.">
        <title>Cloning and expression of a human CDC42 GTPase-activating protein reveals a functional SH3-binding domain.</title>
        <authorList>
            <person name="Barfod E.T."/>
            <person name="Zheng Y."/>
            <person name="Kuang W.-J."/>
            <person name="Hart M.J."/>
            <person name="Evans T."/>
            <person name="Cerione R.A."/>
            <person name="Ashkenazi A."/>
        </authorList>
    </citation>
    <scope>NUCLEOTIDE SEQUENCE [MRNA]</scope>
    <source>
        <tissue>Platelet</tissue>
    </source>
</reference>
<reference key="2">
    <citation type="journal article" date="1994" name="J. Biol. Chem.">
        <title>Characterization of rhoGAP. A GTPase-activating protein for rho-related small GTPases.</title>
        <authorList>
            <person name="Lancaster C.A."/>
            <person name="Taylor-Harris P.M."/>
            <person name="Self A.J."/>
            <person name="Brill S."/>
            <person name="van Erp H.E."/>
            <person name="Hall A."/>
        </authorList>
    </citation>
    <scope>NUCLEOTIDE SEQUENCE [MRNA]</scope>
    <source>
        <tissue>Fibrosarcoma</tissue>
    </source>
</reference>
<reference key="3">
    <citation type="submission" date="2005-09" db="EMBL/GenBank/DDBJ databases">
        <authorList>
            <person name="Mural R.J."/>
            <person name="Istrail S."/>
            <person name="Sutton G.G."/>
            <person name="Florea L."/>
            <person name="Halpern A.L."/>
            <person name="Mobarry C.M."/>
            <person name="Lippert R."/>
            <person name="Walenz B."/>
            <person name="Shatkay H."/>
            <person name="Dew I."/>
            <person name="Miller J.R."/>
            <person name="Flanigan M.J."/>
            <person name="Edwards N.J."/>
            <person name="Bolanos R."/>
            <person name="Fasulo D."/>
            <person name="Halldorsson B.V."/>
            <person name="Hannenhalli S."/>
            <person name="Turner R."/>
            <person name="Yooseph S."/>
            <person name="Lu F."/>
            <person name="Nusskern D.R."/>
            <person name="Shue B.C."/>
            <person name="Zheng X.H."/>
            <person name="Zhong F."/>
            <person name="Delcher A.L."/>
            <person name="Huson D.H."/>
            <person name="Kravitz S.A."/>
            <person name="Mouchard L."/>
            <person name="Reinert K."/>
            <person name="Remington K.A."/>
            <person name="Clark A.G."/>
            <person name="Waterman M.S."/>
            <person name="Eichler E.E."/>
            <person name="Adams M.D."/>
            <person name="Hunkapiller M.W."/>
            <person name="Myers E.W."/>
            <person name="Venter J.C."/>
        </authorList>
    </citation>
    <scope>NUCLEOTIDE SEQUENCE [LARGE SCALE GENOMIC DNA]</scope>
</reference>
<reference key="4">
    <citation type="journal article" date="2004" name="Genome Res.">
        <title>The status, quality, and expansion of the NIH full-length cDNA project: the Mammalian Gene Collection (MGC).</title>
        <authorList>
            <consortium name="The MGC Project Team"/>
        </authorList>
    </citation>
    <scope>NUCLEOTIDE SEQUENCE [LARGE SCALE MRNA]</scope>
    <source>
        <tissue>Pancreas</tissue>
    </source>
</reference>
<reference key="5">
    <citation type="journal article" date="1991" name="Biochem. J.">
        <title>Purification and N-terminal sequence of the p21rho GTPase-activating protein, rho GAP.</title>
        <authorList>
            <person name="Garrett M.D."/>
            <person name="Major G.N."/>
            <person name="Totty N."/>
            <person name="Hall A."/>
        </authorList>
    </citation>
    <scope>PROTEIN SEQUENCE OF 213-227</scope>
    <source>
        <tissue>Spleen</tissue>
    </source>
</reference>
<reference key="6">
    <citation type="journal article" date="1991" name="Nature">
        <title>Bcr encodes a GTPase-activating protein for p21rac.</title>
        <authorList>
            <person name="Diekmann D."/>
            <person name="Brill S."/>
            <person name="Garrett M.D."/>
            <person name="Totty N."/>
            <person name="Hsuan J."/>
            <person name="Monfries C."/>
            <person name="Hall C."/>
            <person name="Lim L."/>
            <person name="Hall A."/>
        </authorList>
    </citation>
    <scope>PROTEIN SEQUENCE OF 386-416</scope>
</reference>
<reference key="7">
    <citation type="journal article" date="2003" name="Biochem. Biophys. Res. Commun.">
        <title>BNIPL-2, a novel homologue of BNIP-2, interacts with Bcl-2 and Cdc42GAP in apoptosis.</title>
        <authorList>
            <person name="Qin W."/>
            <person name="Hu J."/>
            <person name="Guo M."/>
            <person name="Xu J."/>
            <person name="Li J."/>
            <person name="Yao G."/>
            <person name="Zhou X."/>
            <person name="Jiang H."/>
            <person name="Zhang P."/>
            <person name="Shen L."/>
            <person name="Wan D."/>
            <person name="Gu J."/>
        </authorList>
    </citation>
    <scope>INTERACTION WITH BNIPL</scope>
</reference>
<reference key="8">
    <citation type="journal article" date="2004" name="EMBO J.">
        <title>Exportin 7 defines a novel general nuclear export pathway.</title>
        <authorList>
            <person name="Mingot J.-M."/>
            <person name="Bohnsack M.T."/>
            <person name="Jaekle U."/>
            <person name="Goerlich D."/>
        </authorList>
    </citation>
    <scope>IDENTIFICATION IN A COMPLEX WITH XPO7; EIF4A1; VPS26A; VPS29; VPS35 AND SFN</scope>
</reference>
<reference key="9">
    <citation type="journal article" date="2008" name="J. Proteome Res.">
        <title>Phosphoproteome of resting human platelets.</title>
        <authorList>
            <person name="Zahedi R.P."/>
            <person name="Lewandrowski U."/>
            <person name="Wiesner J."/>
            <person name="Wortelkamp S."/>
            <person name="Moebius J."/>
            <person name="Schuetz C."/>
            <person name="Walter U."/>
            <person name="Gambaryan S."/>
            <person name="Sickmann A."/>
        </authorList>
    </citation>
    <scope>IDENTIFICATION BY MASS SPECTROMETRY [LARGE SCALE ANALYSIS]</scope>
    <source>
        <tissue>Platelet</tissue>
    </source>
</reference>
<reference key="10">
    <citation type="journal article" date="2008" name="Proc. Natl. Acad. Sci. U.S.A.">
        <title>A quantitative atlas of mitotic phosphorylation.</title>
        <authorList>
            <person name="Dephoure N."/>
            <person name="Zhou C."/>
            <person name="Villen J."/>
            <person name="Beausoleil S.A."/>
            <person name="Bakalarski C.E."/>
            <person name="Elledge S.J."/>
            <person name="Gygi S.P."/>
        </authorList>
    </citation>
    <scope>PHOSPHORYLATION [LARGE SCALE ANALYSIS] AT SER-51</scope>
    <scope>IDENTIFICATION BY MASS SPECTROMETRY [LARGE SCALE ANALYSIS]</scope>
    <source>
        <tissue>Cervix carcinoma</tissue>
    </source>
</reference>
<reference key="11">
    <citation type="journal article" date="2009" name="Anal. Chem.">
        <title>Lys-N and trypsin cover complementary parts of the phosphoproteome in a refined SCX-based approach.</title>
        <authorList>
            <person name="Gauci S."/>
            <person name="Helbig A.O."/>
            <person name="Slijper M."/>
            <person name="Krijgsveld J."/>
            <person name="Heck A.J."/>
            <person name="Mohammed S."/>
        </authorList>
    </citation>
    <scope>ACETYLATION [LARGE SCALE ANALYSIS] AT MET-1</scope>
    <scope>IDENTIFICATION BY MASS SPECTROMETRY [LARGE SCALE ANALYSIS]</scope>
</reference>
<reference key="12">
    <citation type="journal article" date="2009" name="Science">
        <title>Lysine acetylation targets protein complexes and co-regulates major cellular functions.</title>
        <authorList>
            <person name="Choudhary C."/>
            <person name="Kumar C."/>
            <person name="Gnad F."/>
            <person name="Nielsen M.L."/>
            <person name="Rehman M."/>
            <person name="Walther T.C."/>
            <person name="Olsen J.V."/>
            <person name="Mann M."/>
        </authorList>
    </citation>
    <scope>ACETYLATION [LARGE SCALE ANALYSIS] AT LYS-80</scope>
    <scope>IDENTIFICATION BY MASS SPECTROMETRY [LARGE SCALE ANALYSIS]</scope>
</reference>
<reference key="13">
    <citation type="journal article" date="2010" name="Sci. Signal.">
        <title>Quantitative phosphoproteomics reveals widespread full phosphorylation site occupancy during mitosis.</title>
        <authorList>
            <person name="Olsen J.V."/>
            <person name="Vermeulen M."/>
            <person name="Santamaria A."/>
            <person name="Kumar C."/>
            <person name="Miller M.L."/>
            <person name="Jensen L.J."/>
            <person name="Gnad F."/>
            <person name="Cox J."/>
            <person name="Jensen T.S."/>
            <person name="Nigg E.A."/>
            <person name="Brunak S."/>
            <person name="Mann M."/>
        </authorList>
    </citation>
    <scope>PHOSPHORYLATION [LARGE SCALE ANALYSIS] AT SER-51</scope>
    <scope>IDENTIFICATION BY MASS SPECTROMETRY [LARGE SCALE ANALYSIS]</scope>
    <source>
        <tissue>Cervix carcinoma</tissue>
    </source>
</reference>
<reference key="14">
    <citation type="journal article" date="2011" name="BMC Syst. Biol.">
        <title>Initial characterization of the human central proteome.</title>
        <authorList>
            <person name="Burkard T.R."/>
            <person name="Planyavsky M."/>
            <person name="Kaupe I."/>
            <person name="Breitwieser F.P."/>
            <person name="Buerckstuemmer T."/>
            <person name="Bennett K.L."/>
            <person name="Superti-Furga G."/>
            <person name="Colinge J."/>
        </authorList>
    </citation>
    <scope>IDENTIFICATION BY MASS SPECTROMETRY [LARGE SCALE ANALYSIS]</scope>
</reference>
<reference key="15">
    <citation type="journal article" date="2011" name="Sci. Signal.">
        <title>System-wide temporal characterization of the proteome and phosphoproteome of human embryonic stem cell differentiation.</title>
        <authorList>
            <person name="Rigbolt K.T."/>
            <person name="Prokhorova T.A."/>
            <person name="Akimov V."/>
            <person name="Henningsen J."/>
            <person name="Johansen P.T."/>
            <person name="Kratchmarova I."/>
            <person name="Kassem M."/>
            <person name="Mann M."/>
            <person name="Olsen J.V."/>
            <person name="Blagoev B."/>
        </authorList>
    </citation>
    <scope>PHOSPHORYLATION [LARGE SCALE ANALYSIS] AT SER-51</scope>
    <scope>IDENTIFICATION BY MASS SPECTROMETRY [LARGE SCALE ANALYSIS]</scope>
</reference>
<reference key="16">
    <citation type="journal article" date="2012" name="Mol. Cell. Proteomics">
        <title>Comparative large-scale characterisation of plant vs. mammal proteins reveals similar and idiosyncratic N-alpha acetylation features.</title>
        <authorList>
            <person name="Bienvenut W.V."/>
            <person name="Sumpton D."/>
            <person name="Martinez A."/>
            <person name="Lilla S."/>
            <person name="Espagne C."/>
            <person name="Meinnel T."/>
            <person name="Giglione C."/>
        </authorList>
    </citation>
    <scope>ACETYLATION [LARGE SCALE ANALYSIS] AT MET-1</scope>
    <scope>IDENTIFICATION BY MASS SPECTROMETRY [LARGE SCALE ANALYSIS]</scope>
</reference>
<reference key="17">
    <citation type="journal article" date="2013" name="J. Proteome Res.">
        <title>Toward a comprehensive characterization of a human cancer cell phosphoproteome.</title>
        <authorList>
            <person name="Zhou H."/>
            <person name="Di Palma S."/>
            <person name="Preisinger C."/>
            <person name="Peng M."/>
            <person name="Polat A.N."/>
            <person name="Heck A.J."/>
            <person name="Mohammed S."/>
        </authorList>
    </citation>
    <scope>PHOSPHORYLATION [LARGE SCALE ANALYSIS] AT SER-47; SER-50 AND SER-51</scope>
    <scope>IDENTIFICATION BY MASS SPECTROMETRY [LARGE SCALE ANALYSIS]</scope>
    <source>
        <tissue>Cervix carcinoma</tissue>
        <tissue>Erythroleukemia</tissue>
    </source>
</reference>
<reference key="18">
    <citation type="journal article" date="2014" name="J. Proteomics">
        <title>An enzyme assisted RP-RPLC approach for in-depth analysis of human liver phosphoproteome.</title>
        <authorList>
            <person name="Bian Y."/>
            <person name="Song C."/>
            <person name="Cheng K."/>
            <person name="Dong M."/>
            <person name="Wang F."/>
            <person name="Huang J."/>
            <person name="Sun D."/>
            <person name="Wang L."/>
            <person name="Ye M."/>
            <person name="Zou H."/>
        </authorList>
    </citation>
    <scope>IDENTIFICATION BY MASS SPECTROMETRY [LARGE SCALE ANALYSIS]</scope>
    <source>
        <tissue>Liver</tissue>
    </source>
</reference>
<reference key="19">
    <citation type="journal article" date="2015" name="Proteomics">
        <title>N-terminome analysis of the human mitochondrial proteome.</title>
        <authorList>
            <person name="Vaca Jacome A.S."/>
            <person name="Rabilloud T."/>
            <person name="Schaeffer-Reiss C."/>
            <person name="Rompais M."/>
            <person name="Ayoub D."/>
            <person name="Lane L."/>
            <person name="Bairoch A."/>
            <person name="Van Dorsselaer A."/>
            <person name="Carapito C."/>
        </authorList>
    </citation>
    <scope>IDENTIFICATION BY MASS SPECTROMETRY [LARGE SCALE ANALYSIS]</scope>
</reference>
<reference key="20">
    <citation type="journal article" date="1997" name="Nature">
        <title>The structure of the GTPase-activating domain from p50rhoGAP.</title>
        <authorList>
            <person name="Barrett T."/>
            <person name="Xiao B."/>
            <person name="Dodson E.J."/>
            <person name="Dodson G."/>
            <person name="Ludbrook S.B."/>
            <person name="Nurmahomed K."/>
            <person name="Gamblin S.J."/>
            <person name="Musacchio A."/>
            <person name="Smerdon S.J."/>
            <person name="Eccleston J.F."/>
        </authorList>
    </citation>
    <scope>X-RAY CRYSTALLOGRAPHY (2.0 ANGSTROMS) OF 198-439</scope>
</reference>
<reference key="21">
    <citation type="journal article" date="1997" name="Nature">
        <title>Crystal structure of a small G protein in complex with the GTPase-activating protein rhoGAP.</title>
        <authorList>
            <person name="Rittinger K."/>
            <person name="Walker P.A."/>
            <person name="Eccleston J.F."/>
            <person name="Nurmahomed K."/>
            <person name="Owen D."/>
            <person name="Laue E."/>
            <person name="Gamblin S.J."/>
            <person name="Smerdon S.J."/>
        </authorList>
    </citation>
    <scope>X-RAY CRYSTALLOGRAPHY (2.7 ANGSTROMS) OF 233-431 IN COMPLEX WITH CDC42</scope>
</reference>
<evidence type="ECO:0000250" key="1">
    <source>
        <dbReference type="UniProtKB" id="Q5FWK3"/>
    </source>
</evidence>
<evidence type="ECO:0000255" key="2">
    <source>
        <dbReference type="PROSITE-ProRule" id="PRU00056"/>
    </source>
</evidence>
<evidence type="ECO:0000255" key="3">
    <source>
        <dbReference type="PROSITE-ProRule" id="PRU00172"/>
    </source>
</evidence>
<evidence type="ECO:0000256" key="4">
    <source>
        <dbReference type="SAM" id="MobiDB-lite"/>
    </source>
</evidence>
<evidence type="ECO:0000269" key="5">
    <source>
    </source>
</evidence>
<evidence type="ECO:0000269" key="6">
    <source>
    </source>
</evidence>
<evidence type="ECO:0000269" key="7">
    <source>
    </source>
</evidence>
<evidence type="ECO:0000305" key="8"/>
<evidence type="ECO:0007744" key="9">
    <source>
    </source>
</evidence>
<evidence type="ECO:0007744" key="10">
    <source>
    </source>
</evidence>
<evidence type="ECO:0007744" key="11">
    <source>
    </source>
</evidence>
<evidence type="ECO:0007744" key="12">
    <source>
    </source>
</evidence>
<evidence type="ECO:0007744" key="13">
    <source>
    </source>
</evidence>
<evidence type="ECO:0007744" key="14">
    <source>
    </source>
</evidence>
<evidence type="ECO:0007744" key="15">
    <source>
    </source>
</evidence>
<evidence type="ECO:0007829" key="16">
    <source>
        <dbReference type="PDB" id="1TX4"/>
    </source>
</evidence>
<evidence type="ECO:0007829" key="17">
    <source>
        <dbReference type="PDB" id="6R3V"/>
    </source>
</evidence>
<evidence type="ECO:0007829" key="18">
    <source>
        <dbReference type="PDB" id="7QSC"/>
    </source>
</evidence>
<comment type="function">
    <text>GTPase activator for the Rho, Rac and Cdc42 proteins, converting them to the putatively inactive GDP-bound state. Cdc42 seems to be the preferred substrate.</text>
</comment>
<comment type="subunit">
    <text evidence="5 6 7">Found in a complex with XPO7, EIF4A1, ARHGAP1, VPS26A, VPS29, VPS35 and SFN. Interacts with BNIPL.</text>
</comment>
<comment type="interaction">
    <interactant intactId="EBI-602762">
        <id>Q07960</id>
    </interactant>
    <interactant intactId="EBI-287394">
        <id>P60953-2</id>
        <label>CDC42</label>
    </interactant>
    <organismsDiffer>false</organismsDiffer>
    <experiments>3</experiments>
</comment>
<comment type="interaction">
    <interactant intactId="EBI-602762">
        <id>Q07960</id>
    </interactant>
    <interactant intactId="EBI-446668">
        <id>P61586</id>
        <label>RHOA</label>
    </interactant>
    <organismsDiffer>false</organismsDiffer>
    <experiments>3</experiments>
</comment>
<comment type="interaction">
    <interactant intactId="EBI-602762">
        <id>Q07960</id>
    </interactant>
    <interactant intactId="EBI-747589">
        <id>P08134</id>
        <label>RHOC</label>
    </interactant>
    <organismsDiffer>false</organismsDiffer>
    <experiments>2</experiments>
</comment>
<comment type="interaction">
    <interactant intactId="EBI-602762">
        <id>Q07960</id>
    </interactant>
    <interactant intactId="EBI-697911">
        <id>Q99961</id>
        <label>SH3GL1</label>
    </interactant>
    <organismsDiffer>false</organismsDiffer>
    <experiments>3</experiments>
</comment>
<comment type="subcellular location">
    <subcellularLocation>
        <location>Cytoplasm</location>
    </subcellularLocation>
</comment>
<comment type="tissue specificity">
    <text>Ubiquitous.</text>
</comment>
<comment type="sequence caution" evidence="8">
    <conflict type="erroneous initiation">
        <sequence resource="EMBL-CDS" id="AAA16142"/>
    </conflict>
</comment>
<sequence length="439" mass="50436">MDPLSELQDDLTLDDTSEALNQLKLASIDEKNWPSDEMPDFPKSDDSKSSSPELVTHLKWDDPYYDIARHQIVEVAGDDKYGRKIIVFSACRMPPSHQLDHSKLLGYLKHTLDQYVESDYTLLYLHHGLTSDNKPSLSWLRDAYREFDRKYKKNIKALYIVHPTMFIKTLLILFKPLISFKFGQKIFYVNYLSELSEHVKLEQLGIPRQVLKYDDFLKSTQKSPATAPKPMPPRPPLPNQQFGVSLQHLQEKNPEQEPIPIVLRETVAYLQAHALTTEGIFRRSANTQVVREVQQKYNMGLPVDFDQYNELHLPAVILKTFLRELPEPLLTFDLYPHVVGFLNIDESQRVPATLQVLQTLPEENYQVLRFLTAFLVQISAHSDQNKMTNTNLAVVFGPNLLWAKDAAITLKAINPINTFTKFLLDHQGELFPSPDPSGL</sequence>
<accession>Q07960</accession>
<accession>D3DQQ6</accession>
<keyword id="KW-0002">3D-structure</keyword>
<keyword id="KW-0007">Acetylation</keyword>
<keyword id="KW-0963">Cytoplasm</keyword>
<keyword id="KW-0903">Direct protein sequencing</keyword>
<keyword id="KW-0343">GTPase activation</keyword>
<keyword id="KW-0597">Phosphoprotein</keyword>
<keyword id="KW-1267">Proteomics identification</keyword>
<keyword id="KW-1185">Reference proteome</keyword>
<keyword id="KW-0729">SH3-binding</keyword>
<proteinExistence type="evidence at protein level"/>
<name>RHG01_HUMAN</name>
<gene>
    <name type="primary">ARHGAP1</name>
    <name type="synonym">CDC42GAP</name>
    <name type="synonym">RHOGAP1</name>
</gene>